<accession>Q5E445</accession>
<comment type="function">
    <text evidence="1">Prevents the cell division inhibition by proteins MinC and MinD at internal division sites while permitting inhibition at polar sites. This ensures cell division at the proper site by restricting the formation of a division septum at the midpoint of the long axis of the cell.</text>
</comment>
<comment type="similarity">
    <text evidence="1">Belongs to the MinE family.</text>
</comment>
<proteinExistence type="inferred from homology"/>
<sequence length="87" mass="9889">MALLEFFRPQKKATANIAKERLQIIVAERRNGGPAPSYLPQLKEDILKVISKYVEVNPDMVTVSLEQKEEDLSVLELNVTLPDEDDH</sequence>
<gene>
    <name evidence="1" type="primary">minE</name>
    <name type="ordered locus">VF_1706</name>
</gene>
<keyword id="KW-0131">Cell cycle</keyword>
<keyword id="KW-0132">Cell division</keyword>
<keyword id="KW-1185">Reference proteome</keyword>
<protein>
    <recommendedName>
        <fullName evidence="1">Cell division topological specificity factor</fullName>
    </recommendedName>
</protein>
<dbReference type="EMBL" id="CP000020">
    <property type="protein sequence ID" value="AAW86201.1"/>
    <property type="molecule type" value="Genomic_DNA"/>
</dbReference>
<dbReference type="RefSeq" id="WP_005420052.1">
    <property type="nucleotide sequence ID" value="NZ_CAWLES010000001.1"/>
</dbReference>
<dbReference type="RefSeq" id="YP_205089.1">
    <property type="nucleotide sequence ID" value="NC_006840.2"/>
</dbReference>
<dbReference type="SMR" id="Q5E445"/>
<dbReference type="STRING" id="312309.VF_1706"/>
<dbReference type="EnsemblBacteria" id="AAW86201">
    <property type="protein sequence ID" value="AAW86201"/>
    <property type="gene ID" value="VF_1706"/>
</dbReference>
<dbReference type="GeneID" id="54164401"/>
<dbReference type="KEGG" id="vfi:VF_1706"/>
<dbReference type="PATRIC" id="fig|312309.11.peg.1728"/>
<dbReference type="eggNOG" id="COG0851">
    <property type="taxonomic scope" value="Bacteria"/>
</dbReference>
<dbReference type="HOGENOM" id="CLU_137929_2_2_6"/>
<dbReference type="OrthoDB" id="9802655at2"/>
<dbReference type="Proteomes" id="UP000000537">
    <property type="component" value="Chromosome I"/>
</dbReference>
<dbReference type="GO" id="GO:0051301">
    <property type="term" value="P:cell division"/>
    <property type="evidence" value="ECO:0007669"/>
    <property type="project" value="UniProtKB-KW"/>
</dbReference>
<dbReference type="GO" id="GO:0032955">
    <property type="term" value="P:regulation of division septum assembly"/>
    <property type="evidence" value="ECO:0007669"/>
    <property type="project" value="InterPro"/>
</dbReference>
<dbReference type="FunFam" id="3.30.1070.10:FF:000001">
    <property type="entry name" value="Cell division topological specificity factor"/>
    <property type="match status" value="1"/>
</dbReference>
<dbReference type="Gene3D" id="3.30.1070.10">
    <property type="entry name" value="Cell division topological specificity factor MinE"/>
    <property type="match status" value="1"/>
</dbReference>
<dbReference type="HAMAP" id="MF_00262">
    <property type="entry name" value="MinE"/>
    <property type="match status" value="1"/>
</dbReference>
<dbReference type="InterPro" id="IPR005527">
    <property type="entry name" value="MinE"/>
</dbReference>
<dbReference type="InterPro" id="IPR036707">
    <property type="entry name" value="MinE_sf"/>
</dbReference>
<dbReference type="NCBIfam" id="TIGR01215">
    <property type="entry name" value="minE"/>
    <property type="match status" value="1"/>
</dbReference>
<dbReference type="NCBIfam" id="NF001422">
    <property type="entry name" value="PRK00296.1"/>
    <property type="match status" value="1"/>
</dbReference>
<dbReference type="Pfam" id="PF03776">
    <property type="entry name" value="MinE"/>
    <property type="match status" value="1"/>
</dbReference>
<dbReference type="SUPFAM" id="SSF55229">
    <property type="entry name" value="Cell division protein MinE topological specificity domain"/>
    <property type="match status" value="1"/>
</dbReference>
<reference key="1">
    <citation type="journal article" date="2005" name="Proc. Natl. Acad. Sci. U.S.A.">
        <title>Complete genome sequence of Vibrio fischeri: a symbiotic bacterium with pathogenic congeners.</title>
        <authorList>
            <person name="Ruby E.G."/>
            <person name="Urbanowski M."/>
            <person name="Campbell J."/>
            <person name="Dunn A."/>
            <person name="Faini M."/>
            <person name="Gunsalus R."/>
            <person name="Lostroh P."/>
            <person name="Lupp C."/>
            <person name="McCann J."/>
            <person name="Millikan D."/>
            <person name="Schaefer A."/>
            <person name="Stabb E."/>
            <person name="Stevens A."/>
            <person name="Visick K."/>
            <person name="Whistler C."/>
            <person name="Greenberg E.P."/>
        </authorList>
    </citation>
    <scope>NUCLEOTIDE SEQUENCE [LARGE SCALE GENOMIC DNA]</scope>
    <source>
        <strain>ATCC 700601 / ES114</strain>
    </source>
</reference>
<organism>
    <name type="scientific">Aliivibrio fischeri (strain ATCC 700601 / ES114)</name>
    <name type="common">Vibrio fischeri</name>
    <dbReference type="NCBI Taxonomy" id="312309"/>
    <lineage>
        <taxon>Bacteria</taxon>
        <taxon>Pseudomonadati</taxon>
        <taxon>Pseudomonadota</taxon>
        <taxon>Gammaproteobacteria</taxon>
        <taxon>Vibrionales</taxon>
        <taxon>Vibrionaceae</taxon>
        <taxon>Aliivibrio</taxon>
    </lineage>
</organism>
<feature type="chain" id="PRO_0000298214" description="Cell division topological specificity factor">
    <location>
        <begin position="1"/>
        <end position="87"/>
    </location>
</feature>
<name>MINE_ALIF1</name>
<evidence type="ECO:0000255" key="1">
    <source>
        <dbReference type="HAMAP-Rule" id="MF_00262"/>
    </source>
</evidence>